<reference key="1">
    <citation type="journal article" date="2007" name="Genome Res.">
        <title>Genome characteristics of facultatively symbiotic Frankia sp. strains reflect host range and host plant biogeography.</title>
        <authorList>
            <person name="Normand P."/>
            <person name="Lapierre P."/>
            <person name="Tisa L.S."/>
            <person name="Gogarten J.P."/>
            <person name="Alloisio N."/>
            <person name="Bagnarol E."/>
            <person name="Bassi C.A."/>
            <person name="Berry A.M."/>
            <person name="Bickhart D.M."/>
            <person name="Choisne N."/>
            <person name="Couloux A."/>
            <person name="Cournoyer B."/>
            <person name="Cruveiller S."/>
            <person name="Daubin V."/>
            <person name="Demange N."/>
            <person name="Francino M.P."/>
            <person name="Goltsman E."/>
            <person name="Huang Y."/>
            <person name="Kopp O.R."/>
            <person name="Labarre L."/>
            <person name="Lapidus A."/>
            <person name="Lavire C."/>
            <person name="Marechal J."/>
            <person name="Martinez M."/>
            <person name="Mastronunzio J.E."/>
            <person name="Mullin B.C."/>
            <person name="Niemann J."/>
            <person name="Pujic P."/>
            <person name="Rawnsley T."/>
            <person name="Rouy Z."/>
            <person name="Schenowitz C."/>
            <person name="Sellstedt A."/>
            <person name="Tavares F."/>
            <person name="Tomkins J.P."/>
            <person name="Vallenet D."/>
            <person name="Valverde C."/>
            <person name="Wall L.G."/>
            <person name="Wang Y."/>
            <person name="Medigue C."/>
            <person name="Benson D.R."/>
        </authorList>
    </citation>
    <scope>NUCLEOTIDE SEQUENCE [LARGE SCALE GENOMIC DNA]</scope>
    <source>
        <strain>DSM 45818 / CECT 9043 / HFP020203 / CcI3</strain>
    </source>
</reference>
<proteinExistence type="inferred from homology"/>
<organism>
    <name type="scientific">Frankia casuarinae (strain DSM 45818 / CECT 9043 / HFP020203 / CcI3)</name>
    <dbReference type="NCBI Taxonomy" id="106370"/>
    <lineage>
        <taxon>Bacteria</taxon>
        <taxon>Bacillati</taxon>
        <taxon>Actinomycetota</taxon>
        <taxon>Actinomycetes</taxon>
        <taxon>Frankiales</taxon>
        <taxon>Frankiaceae</taxon>
        <taxon>Frankia</taxon>
    </lineage>
</organism>
<feature type="chain" id="PRO_0000389184" description="Non-homologous end joining protein Ku">
    <location>
        <begin position="1"/>
        <end position="396"/>
    </location>
</feature>
<feature type="domain" description="Ku" evidence="1">
    <location>
        <begin position="9"/>
        <end position="189"/>
    </location>
</feature>
<feature type="region of interest" description="Disordered" evidence="2">
    <location>
        <begin position="278"/>
        <end position="396"/>
    </location>
</feature>
<feature type="compositionally biased region" description="Low complexity" evidence="2">
    <location>
        <begin position="278"/>
        <end position="288"/>
    </location>
</feature>
<feature type="compositionally biased region" description="Basic and acidic residues" evidence="2">
    <location>
        <begin position="294"/>
        <end position="312"/>
    </location>
</feature>
<feature type="compositionally biased region" description="Polar residues" evidence="2">
    <location>
        <begin position="315"/>
        <end position="336"/>
    </location>
</feature>
<feature type="compositionally biased region" description="Low complexity" evidence="2">
    <location>
        <begin position="337"/>
        <end position="396"/>
    </location>
</feature>
<sequence>MRATWKGVISFGLVSIPVRLYSATQERDVAFHQVRRSDGSRIRYRRVAEADGDEVNYADIAKGYELPDGETVVLTDEDFANLPLSTSRAIDVLEFVPLEQVDPIYFAKSYYVEPDRTGAKPYVLLRDALAASGRVALVKIALRQREQLATLRVRGGVFVLETMVWPDEVRQPDFPFLEEDVAVRPQELSVAASLIHTLAADFDPTRYTDNYREALQAVIDAKVAGREVVASPGGPASEAVGDLMAALRASIAAARAGRPGEAAVAGGAAVAGGAAVADGDAGPAAAGVTDEGPDDKASDDKASDDKASDGRRGGRTSSVKGASSAPGTRSTARKTPSSTRSTAKTNAATKTPPAKTSAAKASAAKTSAAKATSSRTAPKTAPRTPTSKTPPTRRSA</sequence>
<protein>
    <recommendedName>
        <fullName evidence="1">Non-homologous end joining protein Ku</fullName>
    </recommendedName>
</protein>
<dbReference type="EMBL" id="CP000249">
    <property type="protein sequence ID" value="ABD13155.1"/>
    <property type="molecule type" value="Genomic_DNA"/>
</dbReference>
<dbReference type="RefSeq" id="WP_011438179.1">
    <property type="nucleotide sequence ID" value="NZ_JENI01000067.1"/>
</dbReference>
<dbReference type="STRING" id="106370.Francci3_3805"/>
<dbReference type="KEGG" id="fra:Francci3_3805"/>
<dbReference type="eggNOG" id="COG1273">
    <property type="taxonomic scope" value="Bacteria"/>
</dbReference>
<dbReference type="HOGENOM" id="CLU_048975_1_1_11"/>
<dbReference type="OrthoDB" id="9795084at2"/>
<dbReference type="PhylomeDB" id="Q2J6D7"/>
<dbReference type="Proteomes" id="UP000001937">
    <property type="component" value="Chromosome"/>
</dbReference>
<dbReference type="GO" id="GO:0003690">
    <property type="term" value="F:double-stranded DNA binding"/>
    <property type="evidence" value="ECO:0007669"/>
    <property type="project" value="UniProtKB-UniRule"/>
</dbReference>
<dbReference type="GO" id="GO:0006310">
    <property type="term" value="P:DNA recombination"/>
    <property type="evidence" value="ECO:0007669"/>
    <property type="project" value="UniProtKB-KW"/>
</dbReference>
<dbReference type="GO" id="GO:0006303">
    <property type="term" value="P:double-strand break repair via nonhomologous end joining"/>
    <property type="evidence" value="ECO:0007669"/>
    <property type="project" value="UniProtKB-UniRule"/>
</dbReference>
<dbReference type="CDD" id="cd00789">
    <property type="entry name" value="KU_like"/>
    <property type="match status" value="1"/>
</dbReference>
<dbReference type="FunFam" id="2.40.290.10:FF:000004">
    <property type="entry name" value="Non-homologous end joining protein Ku"/>
    <property type="match status" value="1"/>
</dbReference>
<dbReference type="Gene3D" id="2.40.290.10">
    <property type="match status" value="1"/>
</dbReference>
<dbReference type="HAMAP" id="MF_01875">
    <property type="entry name" value="Prokaryotic_Ku"/>
    <property type="match status" value="1"/>
</dbReference>
<dbReference type="InterPro" id="IPR006164">
    <property type="entry name" value="Ku70/Ku80_beta-barrel_dom"/>
</dbReference>
<dbReference type="InterPro" id="IPR009187">
    <property type="entry name" value="Prok_Ku"/>
</dbReference>
<dbReference type="InterPro" id="IPR016194">
    <property type="entry name" value="SPOC-like_C_dom_sf"/>
</dbReference>
<dbReference type="NCBIfam" id="TIGR02772">
    <property type="entry name" value="Ku_bact"/>
    <property type="match status" value="1"/>
</dbReference>
<dbReference type="PANTHER" id="PTHR41251">
    <property type="entry name" value="NON-HOMOLOGOUS END JOINING PROTEIN KU"/>
    <property type="match status" value="1"/>
</dbReference>
<dbReference type="PANTHER" id="PTHR41251:SF1">
    <property type="entry name" value="NON-HOMOLOGOUS END JOINING PROTEIN KU"/>
    <property type="match status" value="1"/>
</dbReference>
<dbReference type="Pfam" id="PF02735">
    <property type="entry name" value="Ku"/>
    <property type="match status" value="1"/>
</dbReference>
<dbReference type="PIRSF" id="PIRSF006493">
    <property type="entry name" value="Prok_Ku"/>
    <property type="match status" value="1"/>
</dbReference>
<dbReference type="SMART" id="SM00559">
    <property type="entry name" value="Ku78"/>
    <property type="match status" value="1"/>
</dbReference>
<dbReference type="SUPFAM" id="SSF100939">
    <property type="entry name" value="SPOC domain-like"/>
    <property type="match status" value="1"/>
</dbReference>
<accession>Q2J6D7</accession>
<evidence type="ECO:0000255" key="1">
    <source>
        <dbReference type="HAMAP-Rule" id="MF_01875"/>
    </source>
</evidence>
<evidence type="ECO:0000256" key="2">
    <source>
        <dbReference type="SAM" id="MobiDB-lite"/>
    </source>
</evidence>
<keyword id="KW-0227">DNA damage</keyword>
<keyword id="KW-0233">DNA recombination</keyword>
<keyword id="KW-0234">DNA repair</keyword>
<keyword id="KW-0238">DNA-binding</keyword>
<keyword id="KW-1185">Reference proteome</keyword>
<gene>
    <name evidence="1" type="primary">ku</name>
    <name type="ordered locus">Francci3_3805</name>
</gene>
<comment type="function">
    <text evidence="1">With LigD forms a non-homologous end joining (NHEJ) DNA repair enzyme, which repairs dsDNA breaks with reduced fidelity. Binds linear dsDNA with 5'- and 3'- overhangs but not closed circular dsDNA nor ssDNA. Recruits and stimulates the ligase activity of LigD.</text>
</comment>
<comment type="subunit">
    <text evidence="1">Homodimer. Interacts with LigD.</text>
</comment>
<comment type="similarity">
    <text evidence="1">Belongs to the prokaryotic Ku family.</text>
</comment>
<name>KU_FRACC</name>